<gene>
    <name type="primary">fadE12</name>
    <name type="ordered locus">MT1000</name>
</gene>
<name>ACDC_MYCTO</name>
<protein>
    <recommendedName>
        <fullName>Acyl-CoA dehydrogenase fadE12</fullName>
        <ecNumber>1.3.99.-</ecNumber>
    </recommendedName>
</protein>
<reference key="1">
    <citation type="journal article" date="2002" name="J. Bacteriol.">
        <title>Whole-genome comparison of Mycobacterium tuberculosis clinical and laboratory strains.</title>
        <authorList>
            <person name="Fleischmann R.D."/>
            <person name="Alland D."/>
            <person name="Eisen J.A."/>
            <person name="Carpenter L."/>
            <person name="White O."/>
            <person name="Peterson J.D."/>
            <person name="DeBoy R.T."/>
            <person name="Dodson R.J."/>
            <person name="Gwinn M.L."/>
            <person name="Haft D.H."/>
            <person name="Hickey E.K."/>
            <person name="Kolonay J.F."/>
            <person name="Nelson W.C."/>
            <person name="Umayam L.A."/>
            <person name="Ermolaeva M.D."/>
            <person name="Salzberg S.L."/>
            <person name="Delcher A."/>
            <person name="Utterback T.R."/>
            <person name="Weidman J.F."/>
            <person name="Khouri H.M."/>
            <person name="Gill J."/>
            <person name="Mikula A."/>
            <person name="Bishai W."/>
            <person name="Jacobs W.R. Jr."/>
            <person name="Venter J.C."/>
            <person name="Fraser C.M."/>
        </authorList>
    </citation>
    <scope>NUCLEOTIDE SEQUENCE [LARGE SCALE GENOMIC DNA]</scope>
    <source>
        <strain>CDC 1551 / Oshkosh</strain>
    </source>
</reference>
<proteinExistence type="inferred from homology"/>
<comment type="catalytic activity">
    <reaction>
        <text>a 2,3-saturated acyl-CoA + A = a 2,3-dehydroacyl-CoA + AH2</text>
        <dbReference type="Rhea" id="RHEA:48608"/>
        <dbReference type="ChEBI" id="CHEBI:13193"/>
        <dbReference type="ChEBI" id="CHEBI:17499"/>
        <dbReference type="ChEBI" id="CHEBI:60015"/>
        <dbReference type="ChEBI" id="CHEBI:65111"/>
    </reaction>
</comment>
<comment type="cofactor">
    <cofactor evidence="1">
        <name>FAD</name>
        <dbReference type="ChEBI" id="CHEBI:57692"/>
    </cofactor>
</comment>
<comment type="similarity">
    <text evidence="2">Belongs to the acyl-CoA dehydrogenase family.</text>
</comment>
<evidence type="ECO:0000250" key="1"/>
<evidence type="ECO:0000305" key="2"/>
<sequence length="388" mass="41515">MTDTSFIESEERQALRKAVASWVANYGHEYYLDKARKHEHTSELWAEAGKLGFLGVNLPEEYGGGGAGMYELSLVMEEMAAAGSALLLMVVSPAINGTIIAKFGTDDQKKRWLPGIADGSLTMAFAITEPDAGSNSHKITTTARRDGSDWIIKGQKVFISGIDQAQAVLVVGRSEEAKTGKLRPALFVVPTDAPGFSYTPIEMELVSPERQFQVFLDDVRLPADALVGAEDAAIAQLFAGLNPERIMGAASAVGMGRFALGRAVDYVKTRKVWSTPIGAHQGLAHPLAQCHIEVELAKLMTQKAATLYDHGDDFGAAEAANMAKYAAAEASSRAVDQAVQSMGGNGLTKEYGVAAMMTSARLARIAPISREMVLNFVAQTSLGLPRSY</sequence>
<accession>P9WQG2</accession>
<accession>L0T5G1</accession>
<accession>P71539</accession>
<organism>
    <name type="scientific">Mycobacterium tuberculosis (strain CDC 1551 / Oshkosh)</name>
    <dbReference type="NCBI Taxonomy" id="83331"/>
    <lineage>
        <taxon>Bacteria</taxon>
        <taxon>Bacillati</taxon>
        <taxon>Actinomycetota</taxon>
        <taxon>Actinomycetes</taxon>
        <taxon>Mycobacteriales</taxon>
        <taxon>Mycobacteriaceae</taxon>
        <taxon>Mycobacterium</taxon>
        <taxon>Mycobacterium tuberculosis complex</taxon>
    </lineage>
</organism>
<dbReference type="EC" id="1.3.99.-"/>
<dbReference type="EMBL" id="AE000516">
    <property type="protein sequence ID" value="AAK45249.1"/>
    <property type="molecule type" value="Genomic_DNA"/>
</dbReference>
<dbReference type="PIR" id="B70719">
    <property type="entry name" value="B70719"/>
</dbReference>
<dbReference type="RefSeq" id="WP_003898667.1">
    <property type="nucleotide sequence ID" value="NZ_KK341227.1"/>
</dbReference>
<dbReference type="SMR" id="P9WQG2"/>
<dbReference type="KEGG" id="mtc:MT1000"/>
<dbReference type="PATRIC" id="fig|83331.31.peg.1072"/>
<dbReference type="HOGENOM" id="CLU_018204_0_2_11"/>
<dbReference type="Proteomes" id="UP000001020">
    <property type="component" value="Chromosome"/>
</dbReference>
<dbReference type="GO" id="GO:0005737">
    <property type="term" value="C:cytoplasm"/>
    <property type="evidence" value="ECO:0007669"/>
    <property type="project" value="TreeGrafter"/>
</dbReference>
<dbReference type="GO" id="GO:0003995">
    <property type="term" value="F:acyl-CoA dehydrogenase activity"/>
    <property type="evidence" value="ECO:0007669"/>
    <property type="project" value="TreeGrafter"/>
</dbReference>
<dbReference type="GO" id="GO:0050660">
    <property type="term" value="F:flavin adenine dinucleotide binding"/>
    <property type="evidence" value="ECO:0007669"/>
    <property type="project" value="InterPro"/>
</dbReference>
<dbReference type="GO" id="GO:0033539">
    <property type="term" value="P:fatty acid beta-oxidation using acyl-CoA dehydrogenase"/>
    <property type="evidence" value="ECO:0007669"/>
    <property type="project" value="TreeGrafter"/>
</dbReference>
<dbReference type="CDD" id="cd00567">
    <property type="entry name" value="ACAD"/>
    <property type="match status" value="1"/>
</dbReference>
<dbReference type="FunFam" id="1.10.540.10:FF:000028">
    <property type="entry name" value="Acyl-CoA dehydrogenase fadE12"/>
    <property type="match status" value="1"/>
</dbReference>
<dbReference type="FunFam" id="1.20.140.10:FF:000012">
    <property type="entry name" value="Acyl-CoA dehydrogenase fadE12"/>
    <property type="match status" value="1"/>
</dbReference>
<dbReference type="FunFam" id="2.40.110.10:FF:000002">
    <property type="entry name" value="Acyl-CoA dehydrogenase fadE12"/>
    <property type="match status" value="1"/>
</dbReference>
<dbReference type="Gene3D" id="1.10.540.10">
    <property type="entry name" value="Acyl-CoA dehydrogenase/oxidase, N-terminal domain"/>
    <property type="match status" value="1"/>
</dbReference>
<dbReference type="Gene3D" id="2.40.110.10">
    <property type="entry name" value="Butyryl-CoA Dehydrogenase, subunit A, domain 2"/>
    <property type="match status" value="1"/>
</dbReference>
<dbReference type="Gene3D" id="1.20.140.10">
    <property type="entry name" value="Butyryl-CoA Dehydrogenase, subunit A, domain 3"/>
    <property type="match status" value="1"/>
</dbReference>
<dbReference type="InterPro" id="IPR050741">
    <property type="entry name" value="Acyl-CoA_dehydrogenase"/>
</dbReference>
<dbReference type="InterPro" id="IPR006091">
    <property type="entry name" value="Acyl-CoA_Oxase/DH_mid-dom"/>
</dbReference>
<dbReference type="InterPro" id="IPR046373">
    <property type="entry name" value="Acyl-CoA_Oxase/DH_mid-dom_sf"/>
</dbReference>
<dbReference type="InterPro" id="IPR036250">
    <property type="entry name" value="AcylCo_DH-like_C"/>
</dbReference>
<dbReference type="InterPro" id="IPR009075">
    <property type="entry name" value="AcylCo_DH/oxidase_C"/>
</dbReference>
<dbReference type="InterPro" id="IPR013786">
    <property type="entry name" value="AcylCoA_DH/ox_N"/>
</dbReference>
<dbReference type="InterPro" id="IPR037069">
    <property type="entry name" value="AcylCoA_DH/ox_N_sf"/>
</dbReference>
<dbReference type="InterPro" id="IPR009100">
    <property type="entry name" value="AcylCoA_DH/oxidase_NM_dom_sf"/>
</dbReference>
<dbReference type="PANTHER" id="PTHR48083:SF1">
    <property type="entry name" value="DEHYDROGENASE, PUTATIVE (AFU_ORTHOLOGUE AFUA_7G06510)-RELATED"/>
    <property type="match status" value="1"/>
</dbReference>
<dbReference type="PANTHER" id="PTHR48083">
    <property type="entry name" value="MEDIUM-CHAIN SPECIFIC ACYL-COA DEHYDROGENASE, MITOCHONDRIAL-RELATED"/>
    <property type="match status" value="1"/>
</dbReference>
<dbReference type="Pfam" id="PF00441">
    <property type="entry name" value="Acyl-CoA_dh_1"/>
    <property type="match status" value="1"/>
</dbReference>
<dbReference type="Pfam" id="PF02770">
    <property type="entry name" value="Acyl-CoA_dh_M"/>
    <property type="match status" value="1"/>
</dbReference>
<dbReference type="Pfam" id="PF02771">
    <property type="entry name" value="Acyl-CoA_dh_N"/>
    <property type="match status" value="1"/>
</dbReference>
<dbReference type="SUPFAM" id="SSF47203">
    <property type="entry name" value="Acyl-CoA dehydrogenase C-terminal domain-like"/>
    <property type="match status" value="1"/>
</dbReference>
<dbReference type="SUPFAM" id="SSF56645">
    <property type="entry name" value="Acyl-CoA dehydrogenase NM domain-like"/>
    <property type="match status" value="1"/>
</dbReference>
<feature type="chain" id="PRO_0000426781" description="Acyl-CoA dehydrogenase fadE12">
    <location>
        <begin position="1"/>
        <end position="388"/>
    </location>
</feature>
<keyword id="KW-0274">FAD</keyword>
<keyword id="KW-0285">Flavoprotein</keyword>
<keyword id="KW-0560">Oxidoreductase</keyword>
<keyword id="KW-1185">Reference proteome</keyword>